<dbReference type="EC" id="6.1.1.20" evidence="1"/>
<dbReference type="EMBL" id="CP000115">
    <property type="protein sequence ID" value="ABA03333.1"/>
    <property type="molecule type" value="Genomic_DNA"/>
</dbReference>
<dbReference type="RefSeq" id="WP_011313404.1">
    <property type="nucleotide sequence ID" value="NC_007406.1"/>
</dbReference>
<dbReference type="SMR" id="Q3SWK8"/>
<dbReference type="STRING" id="323098.Nwi_0065"/>
<dbReference type="KEGG" id="nwi:Nwi_0065"/>
<dbReference type="eggNOG" id="COG0072">
    <property type="taxonomic scope" value="Bacteria"/>
</dbReference>
<dbReference type="eggNOG" id="COG0073">
    <property type="taxonomic scope" value="Bacteria"/>
</dbReference>
<dbReference type="HOGENOM" id="CLU_016891_0_0_5"/>
<dbReference type="OrthoDB" id="9805455at2"/>
<dbReference type="Proteomes" id="UP000002531">
    <property type="component" value="Chromosome"/>
</dbReference>
<dbReference type="GO" id="GO:0009328">
    <property type="term" value="C:phenylalanine-tRNA ligase complex"/>
    <property type="evidence" value="ECO:0007669"/>
    <property type="project" value="TreeGrafter"/>
</dbReference>
<dbReference type="GO" id="GO:0005524">
    <property type="term" value="F:ATP binding"/>
    <property type="evidence" value="ECO:0007669"/>
    <property type="project" value="UniProtKB-UniRule"/>
</dbReference>
<dbReference type="GO" id="GO:0000287">
    <property type="term" value="F:magnesium ion binding"/>
    <property type="evidence" value="ECO:0007669"/>
    <property type="project" value="UniProtKB-UniRule"/>
</dbReference>
<dbReference type="GO" id="GO:0004826">
    <property type="term" value="F:phenylalanine-tRNA ligase activity"/>
    <property type="evidence" value="ECO:0007669"/>
    <property type="project" value="UniProtKB-UniRule"/>
</dbReference>
<dbReference type="GO" id="GO:0000049">
    <property type="term" value="F:tRNA binding"/>
    <property type="evidence" value="ECO:0007669"/>
    <property type="project" value="UniProtKB-KW"/>
</dbReference>
<dbReference type="GO" id="GO:0006432">
    <property type="term" value="P:phenylalanyl-tRNA aminoacylation"/>
    <property type="evidence" value="ECO:0007669"/>
    <property type="project" value="UniProtKB-UniRule"/>
</dbReference>
<dbReference type="CDD" id="cd00769">
    <property type="entry name" value="PheRS_beta_core"/>
    <property type="match status" value="1"/>
</dbReference>
<dbReference type="CDD" id="cd02796">
    <property type="entry name" value="tRNA_bind_bactPheRS"/>
    <property type="match status" value="1"/>
</dbReference>
<dbReference type="FunFam" id="2.40.50.140:FF:000045">
    <property type="entry name" value="Phenylalanine--tRNA ligase beta subunit"/>
    <property type="match status" value="1"/>
</dbReference>
<dbReference type="FunFam" id="3.30.70.380:FF:000001">
    <property type="entry name" value="Phenylalanine--tRNA ligase beta subunit"/>
    <property type="match status" value="1"/>
</dbReference>
<dbReference type="FunFam" id="3.50.40.10:FF:000001">
    <property type="entry name" value="Phenylalanine--tRNA ligase beta subunit"/>
    <property type="match status" value="1"/>
</dbReference>
<dbReference type="Gene3D" id="3.30.56.10">
    <property type="match status" value="2"/>
</dbReference>
<dbReference type="Gene3D" id="3.30.930.10">
    <property type="entry name" value="Bira Bifunctional Protein, Domain 2"/>
    <property type="match status" value="1"/>
</dbReference>
<dbReference type="Gene3D" id="3.30.70.380">
    <property type="entry name" value="Ferrodoxin-fold anticodon-binding domain"/>
    <property type="match status" value="1"/>
</dbReference>
<dbReference type="Gene3D" id="2.40.50.140">
    <property type="entry name" value="Nucleic acid-binding proteins"/>
    <property type="match status" value="1"/>
</dbReference>
<dbReference type="Gene3D" id="3.50.40.10">
    <property type="entry name" value="Phenylalanyl-trna Synthetase, Chain B, domain 3"/>
    <property type="match status" value="1"/>
</dbReference>
<dbReference type="HAMAP" id="MF_00283">
    <property type="entry name" value="Phe_tRNA_synth_beta1"/>
    <property type="match status" value="1"/>
</dbReference>
<dbReference type="InterPro" id="IPR045864">
    <property type="entry name" value="aa-tRNA-synth_II/BPL/LPL"/>
</dbReference>
<dbReference type="InterPro" id="IPR005146">
    <property type="entry name" value="B3/B4_tRNA-bd"/>
</dbReference>
<dbReference type="InterPro" id="IPR009061">
    <property type="entry name" value="DNA-bd_dom_put_sf"/>
</dbReference>
<dbReference type="InterPro" id="IPR005121">
    <property type="entry name" value="Fdx_antiC-bd"/>
</dbReference>
<dbReference type="InterPro" id="IPR036690">
    <property type="entry name" value="Fdx_antiC-bd_sf"/>
</dbReference>
<dbReference type="InterPro" id="IPR012340">
    <property type="entry name" value="NA-bd_OB-fold"/>
</dbReference>
<dbReference type="InterPro" id="IPR045060">
    <property type="entry name" value="Phe-tRNA-ligase_IIc_bsu"/>
</dbReference>
<dbReference type="InterPro" id="IPR004532">
    <property type="entry name" value="Phe-tRNA-ligase_IIc_bsu_bact"/>
</dbReference>
<dbReference type="InterPro" id="IPR020825">
    <property type="entry name" value="Phe-tRNA_synthase-like_B3/B4"/>
</dbReference>
<dbReference type="InterPro" id="IPR041616">
    <property type="entry name" value="PheRS_beta_core"/>
</dbReference>
<dbReference type="InterPro" id="IPR002547">
    <property type="entry name" value="tRNA-bd_dom"/>
</dbReference>
<dbReference type="InterPro" id="IPR033714">
    <property type="entry name" value="tRNA_bind_bactPheRS"/>
</dbReference>
<dbReference type="InterPro" id="IPR005147">
    <property type="entry name" value="tRNA_synthase_B5-dom"/>
</dbReference>
<dbReference type="NCBIfam" id="TIGR00472">
    <property type="entry name" value="pheT_bact"/>
    <property type="match status" value="1"/>
</dbReference>
<dbReference type="PANTHER" id="PTHR10947:SF0">
    <property type="entry name" value="PHENYLALANINE--TRNA LIGASE BETA SUBUNIT"/>
    <property type="match status" value="1"/>
</dbReference>
<dbReference type="PANTHER" id="PTHR10947">
    <property type="entry name" value="PHENYLALANYL-TRNA SYNTHETASE BETA CHAIN AND LEUCINE-RICH REPEAT-CONTAINING PROTEIN 47"/>
    <property type="match status" value="1"/>
</dbReference>
<dbReference type="Pfam" id="PF03483">
    <property type="entry name" value="B3_4"/>
    <property type="match status" value="1"/>
</dbReference>
<dbReference type="Pfam" id="PF03484">
    <property type="entry name" value="B5"/>
    <property type="match status" value="1"/>
</dbReference>
<dbReference type="Pfam" id="PF03147">
    <property type="entry name" value="FDX-ACB"/>
    <property type="match status" value="1"/>
</dbReference>
<dbReference type="Pfam" id="PF01588">
    <property type="entry name" value="tRNA_bind"/>
    <property type="match status" value="1"/>
</dbReference>
<dbReference type="Pfam" id="PF17759">
    <property type="entry name" value="tRNA_synthFbeta"/>
    <property type="match status" value="1"/>
</dbReference>
<dbReference type="SMART" id="SM00873">
    <property type="entry name" value="B3_4"/>
    <property type="match status" value="1"/>
</dbReference>
<dbReference type="SMART" id="SM00874">
    <property type="entry name" value="B5"/>
    <property type="match status" value="1"/>
</dbReference>
<dbReference type="SMART" id="SM00896">
    <property type="entry name" value="FDX-ACB"/>
    <property type="match status" value="1"/>
</dbReference>
<dbReference type="SUPFAM" id="SSF54991">
    <property type="entry name" value="Anticodon-binding domain of PheRS"/>
    <property type="match status" value="1"/>
</dbReference>
<dbReference type="SUPFAM" id="SSF55681">
    <property type="entry name" value="Class II aaRS and biotin synthetases"/>
    <property type="match status" value="1"/>
</dbReference>
<dbReference type="SUPFAM" id="SSF50249">
    <property type="entry name" value="Nucleic acid-binding proteins"/>
    <property type="match status" value="1"/>
</dbReference>
<dbReference type="SUPFAM" id="SSF56037">
    <property type="entry name" value="PheT/TilS domain"/>
    <property type="match status" value="1"/>
</dbReference>
<dbReference type="SUPFAM" id="SSF46955">
    <property type="entry name" value="Putative DNA-binding domain"/>
    <property type="match status" value="1"/>
</dbReference>
<dbReference type="PROSITE" id="PS51483">
    <property type="entry name" value="B5"/>
    <property type="match status" value="1"/>
</dbReference>
<dbReference type="PROSITE" id="PS51447">
    <property type="entry name" value="FDX_ACB"/>
    <property type="match status" value="1"/>
</dbReference>
<dbReference type="PROSITE" id="PS50886">
    <property type="entry name" value="TRBD"/>
    <property type="match status" value="1"/>
</dbReference>
<protein>
    <recommendedName>
        <fullName evidence="1">Phenylalanine--tRNA ligase beta subunit</fullName>
        <ecNumber evidence="1">6.1.1.20</ecNumber>
    </recommendedName>
    <alternativeName>
        <fullName evidence="1">Phenylalanyl-tRNA synthetase beta subunit</fullName>
        <shortName evidence="1">PheRS</shortName>
    </alternativeName>
</protein>
<name>SYFB_NITWN</name>
<comment type="catalytic activity">
    <reaction evidence="1">
        <text>tRNA(Phe) + L-phenylalanine + ATP = L-phenylalanyl-tRNA(Phe) + AMP + diphosphate + H(+)</text>
        <dbReference type="Rhea" id="RHEA:19413"/>
        <dbReference type="Rhea" id="RHEA-COMP:9668"/>
        <dbReference type="Rhea" id="RHEA-COMP:9699"/>
        <dbReference type="ChEBI" id="CHEBI:15378"/>
        <dbReference type="ChEBI" id="CHEBI:30616"/>
        <dbReference type="ChEBI" id="CHEBI:33019"/>
        <dbReference type="ChEBI" id="CHEBI:58095"/>
        <dbReference type="ChEBI" id="CHEBI:78442"/>
        <dbReference type="ChEBI" id="CHEBI:78531"/>
        <dbReference type="ChEBI" id="CHEBI:456215"/>
        <dbReference type="EC" id="6.1.1.20"/>
    </reaction>
</comment>
<comment type="cofactor">
    <cofactor evidence="1">
        <name>Mg(2+)</name>
        <dbReference type="ChEBI" id="CHEBI:18420"/>
    </cofactor>
    <text evidence="1">Binds 2 magnesium ions per tetramer.</text>
</comment>
<comment type="subunit">
    <text evidence="1">Tetramer of two alpha and two beta subunits.</text>
</comment>
<comment type="subcellular location">
    <subcellularLocation>
        <location evidence="1">Cytoplasm</location>
    </subcellularLocation>
</comment>
<comment type="similarity">
    <text evidence="1">Belongs to the phenylalanyl-tRNA synthetase beta subunit family. Type 1 subfamily.</text>
</comment>
<sequence length="812" mass="87077">MKFTLSWLKDHLDTDEPLEKLADKLTMIGLEVEHIADKSKTFAPFTIARVVSAVQHPNADRLRVCMVDTGETSDKGDPSYIQVVCGAPNAREGLISVFAPPGTHIPGKNITLGVGTIRGVESRGMLCSAAELEISDDHDGIIELPADAPVGAGYAEWAGLGDPVIEINLTPNRQDCTGVHGIARDLSAADMGRFKDPTIKPVTGEFPCPVKVTVEDASLCPGFALRMVRGVKNGPSPEWLQKRLTSIGLRPINALVDITNFMTYDRARPLHVFDAKKVHGDLTIRRARDGETLKALDGRIYTLDPNVCVIADDKGVESLAGIMGGEETGCDETTTDVLIESALWSEINIAQTGRRLGINSDARYRFERGVDPAFMVPGLEMATRLVMELCGGSPSENVVAGQALPEDRVIDFPLSEIKRLAAIDVPLVEVRRILGHLGFMVAGSGPVVKVAIPTWRTDVQGKADLVEEIVRIVGVDKVPMTPFDRGEAPRKPVLTSIQSRTRKARRALAARGMVEAVNWSFISRTQAELFGGGSSELALANPIASDLSDMRPSLLPGLVAIAQANADRGFADVALFEVGQIFRGDGPQDQFMAAAGLRRGIASSAGLGRHWSGSATANALDAKADAFAVLAAAGAPAAALQIATSHESKNFPAWLHPGRSAAIQIGPHNVLGYFGELHPRVLDELKAEGPLLGFEVILDRIPEAKQKPTRAKPVLELPAFQPVSRDFAFIVDRTVKAADIVRAAQNVDRKLVSGVTVFDIYEGKGIDADKKSVAIAVRLQPRDRTFTDQEIEAVAGKIVAEVAKRTGGSLRG</sequence>
<evidence type="ECO:0000255" key="1">
    <source>
        <dbReference type="HAMAP-Rule" id="MF_00283"/>
    </source>
</evidence>
<proteinExistence type="inferred from homology"/>
<gene>
    <name evidence="1" type="primary">pheT</name>
    <name type="ordered locus">Nwi_0065</name>
</gene>
<accession>Q3SWK8</accession>
<feature type="chain" id="PRO_0000232068" description="Phenylalanine--tRNA ligase beta subunit">
    <location>
        <begin position="1"/>
        <end position="812"/>
    </location>
</feature>
<feature type="domain" description="tRNA-binding" evidence="1">
    <location>
        <begin position="39"/>
        <end position="155"/>
    </location>
</feature>
<feature type="domain" description="B5" evidence="1">
    <location>
        <begin position="405"/>
        <end position="480"/>
    </location>
</feature>
<feature type="domain" description="FDX-ACB" evidence="1">
    <location>
        <begin position="718"/>
        <end position="811"/>
    </location>
</feature>
<feature type="binding site" evidence="1">
    <location>
        <position position="458"/>
    </location>
    <ligand>
        <name>Mg(2+)</name>
        <dbReference type="ChEBI" id="CHEBI:18420"/>
        <note>shared with alpha subunit</note>
    </ligand>
</feature>
<feature type="binding site" evidence="1">
    <location>
        <position position="464"/>
    </location>
    <ligand>
        <name>Mg(2+)</name>
        <dbReference type="ChEBI" id="CHEBI:18420"/>
        <note>shared with alpha subunit</note>
    </ligand>
</feature>
<feature type="binding site" evidence="1">
    <location>
        <position position="467"/>
    </location>
    <ligand>
        <name>Mg(2+)</name>
        <dbReference type="ChEBI" id="CHEBI:18420"/>
        <note>shared with alpha subunit</note>
    </ligand>
</feature>
<feature type="binding site" evidence="1">
    <location>
        <position position="468"/>
    </location>
    <ligand>
        <name>Mg(2+)</name>
        <dbReference type="ChEBI" id="CHEBI:18420"/>
        <note>shared with alpha subunit</note>
    </ligand>
</feature>
<organism>
    <name type="scientific">Nitrobacter winogradskyi (strain ATCC 25391 / DSM 10237 / CIP 104748 / NCIMB 11846 / Nb-255)</name>
    <dbReference type="NCBI Taxonomy" id="323098"/>
    <lineage>
        <taxon>Bacteria</taxon>
        <taxon>Pseudomonadati</taxon>
        <taxon>Pseudomonadota</taxon>
        <taxon>Alphaproteobacteria</taxon>
        <taxon>Hyphomicrobiales</taxon>
        <taxon>Nitrobacteraceae</taxon>
        <taxon>Nitrobacter</taxon>
    </lineage>
</organism>
<reference key="1">
    <citation type="journal article" date="2006" name="Appl. Environ. Microbiol.">
        <title>Genome sequence of the chemolithoautotrophic nitrite-oxidizing bacterium Nitrobacter winogradskyi Nb-255.</title>
        <authorList>
            <person name="Starkenburg S.R."/>
            <person name="Chain P.S.G."/>
            <person name="Sayavedra-Soto L.A."/>
            <person name="Hauser L."/>
            <person name="Land M.L."/>
            <person name="Larimer F.W."/>
            <person name="Malfatti S.A."/>
            <person name="Klotz M.G."/>
            <person name="Bottomley P.J."/>
            <person name="Arp D.J."/>
            <person name="Hickey W.J."/>
        </authorList>
    </citation>
    <scope>NUCLEOTIDE SEQUENCE [LARGE SCALE GENOMIC DNA]</scope>
    <source>
        <strain>ATCC 25391 / DSM 10237 / CIP 104748 / NCIMB 11846 / Nb-255</strain>
    </source>
</reference>
<keyword id="KW-0030">Aminoacyl-tRNA synthetase</keyword>
<keyword id="KW-0067">ATP-binding</keyword>
<keyword id="KW-0963">Cytoplasm</keyword>
<keyword id="KW-0436">Ligase</keyword>
<keyword id="KW-0460">Magnesium</keyword>
<keyword id="KW-0479">Metal-binding</keyword>
<keyword id="KW-0547">Nucleotide-binding</keyword>
<keyword id="KW-0648">Protein biosynthesis</keyword>
<keyword id="KW-1185">Reference proteome</keyword>
<keyword id="KW-0694">RNA-binding</keyword>
<keyword id="KW-0820">tRNA-binding</keyword>